<gene>
    <name type="primary">argB</name>
</gene>
<organism>
    <name type="scientific">Aspergillus niger</name>
    <dbReference type="NCBI Taxonomy" id="5061"/>
    <lineage>
        <taxon>Eukaryota</taxon>
        <taxon>Fungi</taxon>
        <taxon>Dikarya</taxon>
        <taxon>Ascomycota</taxon>
        <taxon>Pezizomycotina</taxon>
        <taxon>Eurotiomycetes</taxon>
        <taxon>Eurotiomycetidae</taxon>
        <taxon>Eurotiales</taxon>
        <taxon>Aspergillaceae</taxon>
        <taxon>Aspergillus</taxon>
        <taxon>Aspergillus subgen. Circumdati</taxon>
    </lineage>
</organism>
<protein>
    <recommendedName>
        <fullName>Ornithine carbamoyltransferase, mitochondrial</fullName>
        <ecNumber>2.1.3.3</ecNumber>
    </recommendedName>
    <alternativeName>
        <fullName>Ornithine transcarbamylase</fullName>
        <shortName>OTCase</shortName>
    </alternativeName>
</protein>
<comment type="catalytic activity">
    <reaction>
        <text>carbamoyl phosphate + L-ornithine = L-citrulline + phosphate + H(+)</text>
        <dbReference type="Rhea" id="RHEA:19513"/>
        <dbReference type="ChEBI" id="CHEBI:15378"/>
        <dbReference type="ChEBI" id="CHEBI:43474"/>
        <dbReference type="ChEBI" id="CHEBI:46911"/>
        <dbReference type="ChEBI" id="CHEBI:57743"/>
        <dbReference type="ChEBI" id="CHEBI:58228"/>
        <dbReference type="EC" id="2.1.3.3"/>
    </reaction>
</comment>
<comment type="pathway">
    <text>Amino-acid biosynthesis; L-arginine biosynthesis; L-arginine from L-ornithine and carbamoyl phosphate: step 1/3.</text>
</comment>
<comment type="subunit">
    <text>Homotrimer.</text>
</comment>
<comment type="subcellular location">
    <subcellularLocation>
        <location>Mitochondrion matrix</location>
    </subcellularLocation>
</comment>
<comment type="similarity">
    <text evidence="3">Belongs to the aspartate/ornithine carbamoyltransferase superfamily. OTCase family.</text>
</comment>
<proteinExistence type="evidence at transcript level"/>
<sequence length="370" mass="39925">MPSPLRTAPQPPLRAFHNPPALRRLYSSTSHSAATPATSPFAPRHLLSIADLTPTEFATLVRNASSHKRAIKSGSIPQSLHGALSGKTVAMMFSKRSTRTRISTEGAVVQMGGHPMFLGKDDIQLGVNESLYDTAVVVSSMVECIVARVGKHADVADLAKHSTKPVINALCDSYHPLQAIADFQTISEHFAASGKGKLEGLGLNGLKIAWVGDANNVLFDMAISARKMGVDVAVATPKGYEIPKEMLEIIEKAGEGVKSPGKLVQTNVPEEAVKGADVLVTDTWVSMGQEEEAAKRLRDFAGFQITSELAKRGGAKEGWRFMHCLPRHPEEVADEVFYGHRSLVFPEAENRLWAAISALEGFVVNKGKIE</sequence>
<reference key="1">
    <citation type="journal article" date="1987" name="Gene">
        <title>Cloning and molecular analysis of the ornithine carbamoyl transferase gene of Aspergillus niger.</title>
        <authorList>
            <person name="Buxton F.P."/>
            <person name="Gwynne D.I."/>
            <person name="Garven S."/>
            <person name="Sibley S."/>
            <person name="Davies R.W."/>
        </authorList>
    </citation>
    <scope>NUCLEOTIDE SEQUENCE [MRNA]</scope>
</reference>
<dbReference type="EC" id="2.1.3.3"/>
<dbReference type="EMBL" id="M19158">
    <property type="protein sequence ID" value="AAA32688.1"/>
    <property type="molecule type" value="mRNA"/>
</dbReference>
<dbReference type="PIR" id="A27362">
    <property type="entry name" value="OWASG"/>
</dbReference>
<dbReference type="SMR" id="P11066"/>
<dbReference type="PaxDb" id="5061-CADANGAP00011057"/>
<dbReference type="VEuPathDB" id="FungiDB:An14g03400"/>
<dbReference type="VEuPathDB" id="FungiDB:ASPNIDRAFT2_1170126"/>
<dbReference type="VEuPathDB" id="FungiDB:ATCC64974_2980"/>
<dbReference type="VEuPathDB" id="FungiDB:M747DRAFT_320140"/>
<dbReference type="eggNOG" id="KOG1504">
    <property type="taxonomic scope" value="Eukaryota"/>
</dbReference>
<dbReference type="UniPathway" id="UPA00068">
    <property type="reaction ID" value="UER00112"/>
</dbReference>
<dbReference type="GO" id="GO:0005759">
    <property type="term" value="C:mitochondrial matrix"/>
    <property type="evidence" value="ECO:0007669"/>
    <property type="project" value="UniProtKB-SubCell"/>
</dbReference>
<dbReference type="GO" id="GO:0016597">
    <property type="term" value="F:amino acid binding"/>
    <property type="evidence" value="ECO:0007669"/>
    <property type="project" value="InterPro"/>
</dbReference>
<dbReference type="GO" id="GO:0004585">
    <property type="term" value="F:ornithine carbamoyltransferase activity"/>
    <property type="evidence" value="ECO:0007669"/>
    <property type="project" value="UniProtKB-EC"/>
</dbReference>
<dbReference type="GO" id="GO:0042450">
    <property type="term" value="P:arginine biosynthetic process via ornithine"/>
    <property type="evidence" value="ECO:0007669"/>
    <property type="project" value="TreeGrafter"/>
</dbReference>
<dbReference type="GO" id="GO:0019240">
    <property type="term" value="P:citrulline biosynthetic process"/>
    <property type="evidence" value="ECO:0007669"/>
    <property type="project" value="TreeGrafter"/>
</dbReference>
<dbReference type="GO" id="GO:0006526">
    <property type="term" value="P:L-arginine biosynthetic process"/>
    <property type="evidence" value="ECO:0007669"/>
    <property type="project" value="UniProtKB-UniPathway"/>
</dbReference>
<dbReference type="FunFam" id="3.40.50.1370:FF:000017">
    <property type="entry name" value="Ornithine carbamoyltransferase"/>
    <property type="match status" value="1"/>
</dbReference>
<dbReference type="FunFam" id="3.40.50.1370:FF:000009">
    <property type="entry name" value="Ornithine carbamoyltransferase, mitochondrial"/>
    <property type="match status" value="1"/>
</dbReference>
<dbReference type="Gene3D" id="3.40.50.1370">
    <property type="entry name" value="Aspartate/ornithine carbamoyltransferase"/>
    <property type="match status" value="2"/>
</dbReference>
<dbReference type="InterPro" id="IPR006132">
    <property type="entry name" value="Asp/Orn_carbamoyltranf_P-bd"/>
</dbReference>
<dbReference type="InterPro" id="IPR006130">
    <property type="entry name" value="Asp/Orn_carbamoylTrfase"/>
</dbReference>
<dbReference type="InterPro" id="IPR036901">
    <property type="entry name" value="Asp/Orn_carbamoylTrfase_sf"/>
</dbReference>
<dbReference type="InterPro" id="IPR006131">
    <property type="entry name" value="Asp_carbamoyltransf_Asp/Orn-bd"/>
</dbReference>
<dbReference type="InterPro" id="IPR002292">
    <property type="entry name" value="Orn/put_carbamltrans"/>
</dbReference>
<dbReference type="NCBIfam" id="TIGR00658">
    <property type="entry name" value="orni_carb_tr"/>
    <property type="match status" value="1"/>
</dbReference>
<dbReference type="NCBIfam" id="NF001986">
    <property type="entry name" value="PRK00779.1"/>
    <property type="match status" value="1"/>
</dbReference>
<dbReference type="PANTHER" id="PTHR45753">
    <property type="entry name" value="ORNITHINE CARBAMOYLTRANSFERASE, MITOCHONDRIAL"/>
    <property type="match status" value="1"/>
</dbReference>
<dbReference type="PANTHER" id="PTHR45753:SF3">
    <property type="entry name" value="ORNITHINE TRANSCARBAMYLASE, MITOCHONDRIAL"/>
    <property type="match status" value="1"/>
</dbReference>
<dbReference type="Pfam" id="PF00185">
    <property type="entry name" value="OTCace"/>
    <property type="match status" value="1"/>
</dbReference>
<dbReference type="Pfam" id="PF02729">
    <property type="entry name" value="OTCace_N"/>
    <property type="match status" value="1"/>
</dbReference>
<dbReference type="PRINTS" id="PR00100">
    <property type="entry name" value="AOTCASE"/>
</dbReference>
<dbReference type="PRINTS" id="PR00102">
    <property type="entry name" value="OTCASE"/>
</dbReference>
<dbReference type="SUPFAM" id="SSF53671">
    <property type="entry name" value="Aspartate/ornithine carbamoyltransferase"/>
    <property type="match status" value="1"/>
</dbReference>
<dbReference type="PROSITE" id="PS00097">
    <property type="entry name" value="CARBAMOYLTRANSFERASE"/>
    <property type="match status" value="1"/>
</dbReference>
<feature type="transit peptide" description="Mitochondrion" evidence="2">
    <location>
        <begin position="1"/>
        <end position="38"/>
    </location>
</feature>
<feature type="chain" id="PRO_0000042692" description="Ornithine carbamoyltransferase, mitochondrial">
    <location>
        <begin position="39"/>
        <end position="370"/>
    </location>
</feature>
<feature type="active site" description="Proton acceptor" evidence="1">
    <location>
        <position position="324"/>
    </location>
</feature>
<feature type="binding site" evidence="1">
    <location>
        <begin position="97"/>
        <end position="100"/>
    </location>
    <ligand>
        <name>carbamoyl phosphate</name>
        <dbReference type="ChEBI" id="CHEBI:58228"/>
    </ligand>
</feature>
<feature type="binding site" evidence="1">
    <location>
        <position position="148"/>
    </location>
    <ligand>
        <name>carbamoyl phosphate</name>
        <dbReference type="ChEBI" id="CHEBI:58228"/>
    </ligand>
</feature>
<feature type="binding site" evidence="1">
    <location>
        <position position="175"/>
    </location>
    <ligand>
        <name>carbamoyl phosphate</name>
        <dbReference type="ChEBI" id="CHEBI:58228"/>
    </ligand>
</feature>
<feature type="binding site" evidence="1">
    <location>
        <position position="178"/>
    </location>
    <ligand>
        <name>carbamoyl phosphate</name>
        <dbReference type="ChEBI" id="CHEBI:58228"/>
    </ligand>
</feature>
<feature type="binding site" evidence="1">
    <location>
        <position position="216"/>
    </location>
    <ligand>
        <name>L-ornithine</name>
        <dbReference type="ChEBI" id="CHEBI:46911"/>
    </ligand>
</feature>
<feature type="binding site" evidence="1">
    <location>
        <position position="282"/>
    </location>
    <ligand>
        <name>L-ornithine</name>
        <dbReference type="ChEBI" id="CHEBI:46911"/>
    </ligand>
</feature>
<feature type="binding site" evidence="1">
    <location>
        <position position="286"/>
    </location>
    <ligand>
        <name>L-ornithine</name>
        <dbReference type="ChEBI" id="CHEBI:46911"/>
    </ligand>
</feature>
<feature type="binding site" evidence="1">
    <location>
        <position position="287"/>
    </location>
    <ligand>
        <name>L-ornithine</name>
        <dbReference type="ChEBI" id="CHEBI:46911"/>
    </ligand>
</feature>
<feature type="binding site" evidence="1">
    <location>
        <begin position="324"/>
        <end position="325"/>
    </location>
    <ligand>
        <name>carbamoyl phosphate</name>
        <dbReference type="ChEBI" id="CHEBI:58228"/>
    </ligand>
</feature>
<feature type="binding site" evidence="1">
    <location>
        <position position="351"/>
    </location>
    <ligand>
        <name>carbamoyl phosphate</name>
        <dbReference type="ChEBI" id="CHEBI:58228"/>
    </ligand>
</feature>
<keyword id="KW-0028">Amino-acid biosynthesis</keyword>
<keyword id="KW-0055">Arginine biosynthesis</keyword>
<keyword id="KW-0496">Mitochondrion</keyword>
<keyword id="KW-0808">Transferase</keyword>
<keyword id="KW-0809">Transit peptide</keyword>
<accession>P11066</accession>
<name>OTC_ASPNG</name>
<evidence type="ECO:0000250" key="1">
    <source>
        <dbReference type="UniProtKB" id="P00480"/>
    </source>
</evidence>
<evidence type="ECO:0000255" key="2"/>
<evidence type="ECO:0000305" key="3"/>